<organism>
    <name type="scientific">Acinetobacter baumannii (strain AB307-0294)</name>
    <dbReference type="NCBI Taxonomy" id="557600"/>
    <lineage>
        <taxon>Bacteria</taxon>
        <taxon>Pseudomonadati</taxon>
        <taxon>Pseudomonadota</taxon>
        <taxon>Gammaproteobacteria</taxon>
        <taxon>Moraxellales</taxon>
        <taxon>Moraxellaceae</taxon>
        <taxon>Acinetobacter</taxon>
        <taxon>Acinetobacter calcoaceticus/baumannii complex</taxon>
    </lineage>
</organism>
<name>RL1_ACIB3</name>
<sequence length="231" mass="23857">MAKLTKRQKAIAAAVEANKVYTLEEAVQVLNSLPAAKFKESLDISVNLGVDPRKSDQVVRGATTLPAGTGKTVRVAVFAQGAQAEAAKEAGADVVGFDDLAESIQGGNLDFDVVIAAPDAMRVVGKLGTILGPRGLMPNPKVGTVTPDVAGAVKNAKSGQARYRVDKAGIIHAAIGQVGFDAAAIRQNVETLVADLKKLKPATSKGVYIKKITLSSTMGPGLTVDVNNVSN</sequence>
<dbReference type="EMBL" id="CP001172">
    <property type="protein sequence ID" value="ACJ58718.1"/>
    <property type="molecule type" value="Genomic_DNA"/>
</dbReference>
<dbReference type="RefSeq" id="WP_001096694.1">
    <property type="nucleotide sequence ID" value="NZ_CP001172.1"/>
</dbReference>
<dbReference type="SMR" id="B7H1K1"/>
<dbReference type="GeneID" id="92892281"/>
<dbReference type="HOGENOM" id="CLU_062853_0_0_6"/>
<dbReference type="Proteomes" id="UP000006924">
    <property type="component" value="Chromosome"/>
</dbReference>
<dbReference type="GO" id="GO:0022625">
    <property type="term" value="C:cytosolic large ribosomal subunit"/>
    <property type="evidence" value="ECO:0007669"/>
    <property type="project" value="TreeGrafter"/>
</dbReference>
<dbReference type="GO" id="GO:0019843">
    <property type="term" value="F:rRNA binding"/>
    <property type="evidence" value="ECO:0007669"/>
    <property type="project" value="UniProtKB-UniRule"/>
</dbReference>
<dbReference type="GO" id="GO:0003735">
    <property type="term" value="F:structural constituent of ribosome"/>
    <property type="evidence" value="ECO:0007669"/>
    <property type="project" value="InterPro"/>
</dbReference>
<dbReference type="GO" id="GO:0000049">
    <property type="term" value="F:tRNA binding"/>
    <property type="evidence" value="ECO:0007669"/>
    <property type="project" value="UniProtKB-KW"/>
</dbReference>
<dbReference type="GO" id="GO:0006417">
    <property type="term" value="P:regulation of translation"/>
    <property type="evidence" value="ECO:0007669"/>
    <property type="project" value="UniProtKB-KW"/>
</dbReference>
<dbReference type="GO" id="GO:0006412">
    <property type="term" value="P:translation"/>
    <property type="evidence" value="ECO:0007669"/>
    <property type="project" value="UniProtKB-UniRule"/>
</dbReference>
<dbReference type="CDD" id="cd00403">
    <property type="entry name" value="Ribosomal_L1"/>
    <property type="match status" value="1"/>
</dbReference>
<dbReference type="FunFam" id="3.40.50.790:FF:000001">
    <property type="entry name" value="50S ribosomal protein L1"/>
    <property type="match status" value="1"/>
</dbReference>
<dbReference type="Gene3D" id="3.30.190.20">
    <property type="match status" value="1"/>
</dbReference>
<dbReference type="Gene3D" id="3.40.50.790">
    <property type="match status" value="1"/>
</dbReference>
<dbReference type="HAMAP" id="MF_01318_B">
    <property type="entry name" value="Ribosomal_uL1_B"/>
    <property type="match status" value="1"/>
</dbReference>
<dbReference type="InterPro" id="IPR005878">
    <property type="entry name" value="Ribosom_uL1_bac-type"/>
</dbReference>
<dbReference type="InterPro" id="IPR002143">
    <property type="entry name" value="Ribosomal_uL1"/>
</dbReference>
<dbReference type="InterPro" id="IPR023674">
    <property type="entry name" value="Ribosomal_uL1-like"/>
</dbReference>
<dbReference type="InterPro" id="IPR028364">
    <property type="entry name" value="Ribosomal_uL1/biogenesis"/>
</dbReference>
<dbReference type="InterPro" id="IPR016095">
    <property type="entry name" value="Ribosomal_uL1_3-a/b-sand"/>
</dbReference>
<dbReference type="InterPro" id="IPR023673">
    <property type="entry name" value="Ribosomal_uL1_CS"/>
</dbReference>
<dbReference type="NCBIfam" id="TIGR01169">
    <property type="entry name" value="rplA_bact"/>
    <property type="match status" value="1"/>
</dbReference>
<dbReference type="PANTHER" id="PTHR36427">
    <property type="entry name" value="54S RIBOSOMAL PROTEIN L1, MITOCHONDRIAL"/>
    <property type="match status" value="1"/>
</dbReference>
<dbReference type="PANTHER" id="PTHR36427:SF3">
    <property type="entry name" value="LARGE RIBOSOMAL SUBUNIT PROTEIN UL1M"/>
    <property type="match status" value="1"/>
</dbReference>
<dbReference type="Pfam" id="PF00687">
    <property type="entry name" value="Ribosomal_L1"/>
    <property type="match status" value="1"/>
</dbReference>
<dbReference type="PIRSF" id="PIRSF002155">
    <property type="entry name" value="Ribosomal_L1"/>
    <property type="match status" value="1"/>
</dbReference>
<dbReference type="SUPFAM" id="SSF56808">
    <property type="entry name" value="Ribosomal protein L1"/>
    <property type="match status" value="1"/>
</dbReference>
<dbReference type="PROSITE" id="PS01199">
    <property type="entry name" value="RIBOSOMAL_L1"/>
    <property type="match status" value="1"/>
</dbReference>
<proteinExistence type="inferred from homology"/>
<reference key="1">
    <citation type="journal article" date="2008" name="J. Bacteriol.">
        <title>Comparative genome sequence analysis of multidrug-resistant Acinetobacter baumannii.</title>
        <authorList>
            <person name="Adams M.D."/>
            <person name="Goglin K."/>
            <person name="Molyneaux N."/>
            <person name="Hujer K.M."/>
            <person name="Lavender H."/>
            <person name="Jamison J.J."/>
            <person name="MacDonald I.J."/>
            <person name="Martin K.M."/>
            <person name="Russo T."/>
            <person name="Campagnari A.A."/>
            <person name="Hujer A.M."/>
            <person name="Bonomo R.A."/>
            <person name="Gill S.R."/>
        </authorList>
    </citation>
    <scope>NUCLEOTIDE SEQUENCE [LARGE SCALE GENOMIC DNA]</scope>
    <source>
        <strain>AB307-0294</strain>
    </source>
</reference>
<keyword id="KW-0678">Repressor</keyword>
<keyword id="KW-0687">Ribonucleoprotein</keyword>
<keyword id="KW-0689">Ribosomal protein</keyword>
<keyword id="KW-0694">RNA-binding</keyword>
<keyword id="KW-0699">rRNA-binding</keyword>
<keyword id="KW-0810">Translation regulation</keyword>
<keyword id="KW-0820">tRNA-binding</keyword>
<gene>
    <name evidence="1" type="primary">rplA</name>
    <name type="ordered locus">ABBFA_003251</name>
</gene>
<evidence type="ECO:0000255" key="1">
    <source>
        <dbReference type="HAMAP-Rule" id="MF_01318"/>
    </source>
</evidence>
<evidence type="ECO:0000305" key="2"/>
<protein>
    <recommendedName>
        <fullName evidence="1">Large ribosomal subunit protein uL1</fullName>
    </recommendedName>
    <alternativeName>
        <fullName evidence="2">50S ribosomal protein L1</fullName>
    </alternativeName>
</protein>
<comment type="function">
    <text evidence="1">Binds directly to 23S rRNA. The L1 stalk is quite mobile in the ribosome, and is involved in E site tRNA release.</text>
</comment>
<comment type="function">
    <text evidence="1">Protein L1 is also a translational repressor protein, it controls the translation of the L11 operon by binding to its mRNA.</text>
</comment>
<comment type="subunit">
    <text evidence="1">Part of the 50S ribosomal subunit.</text>
</comment>
<comment type="similarity">
    <text evidence="1">Belongs to the universal ribosomal protein uL1 family.</text>
</comment>
<accession>B7H1K1</accession>
<feature type="chain" id="PRO_1000141344" description="Large ribosomal subunit protein uL1">
    <location>
        <begin position="1"/>
        <end position="231"/>
    </location>
</feature>